<name>SYV_AERPE</name>
<organism>
    <name type="scientific">Aeropyrum pernix (strain ATCC 700893 / DSM 11879 / JCM 9820 / NBRC 100138 / K1)</name>
    <dbReference type="NCBI Taxonomy" id="272557"/>
    <lineage>
        <taxon>Archaea</taxon>
        <taxon>Thermoproteota</taxon>
        <taxon>Thermoprotei</taxon>
        <taxon>Desulfurococcales</taxon>
        <taxon>Desulfurococcaceae</taxon>
        <taxon>Aeropyrum</taxon>
    </lineage>
</organism>
<accession>Q9YAZ0</accession>
<keyword id="KW-0030">Aminoacyl-tRNA synthetase</keyword>
<keyword id="KW-0067">ATP-binding</keyword>
<keyword id="KW-0963">Cytoplasm</keyword>
<keyword id="KW-0436">Ligase</keyword>
<keyword id="KW-0547">Nucleotide-binding</keyword>
<keyword id="KW-0648">Protein biosynthesis</keyword>
<keyword id="KW-1185">Reference proteome</keyword>
<dbReference type="EC" id="6.1.1.9"/>
<dbReference type="EMBL" id="BA000002">
    <property type="protein sequence ID" value="BAA80808.2"/>
    <property type="molecule type" value="Genomic_DNA"/>
</dbReference>
<dbReference type="PIR" id="C72565">
    <property type="entry name" value="C72565"/>
</dbReference>
<dbReference type="RefSeq" id="WP_010866605.1">
    <property type="nucleotide sequence ID" value="NC_000854.2"/>
</dbReference>
<dbReference type="SMR" id="Q9YAZ0"/>
<dbReference type="STRING" id="272557.APE_1805.1"/>
<dbReference type="EnsemblBacteria" id="BAA80808">
    <property type="protein sequence ID" value="BAA80808"/>
    <property type="gene ID" value="APE_1805.1"/>
</dbReference>
<dbReference type="GeneID" id="1446252"/>
<dbReference type="KEGG" id="ape:APE_1805.1"/>
<dbReference type="PATRIC" id="fig|272557.25.peg.1210"/>
<dbReference type="eggNOG" id="arCOG00808">
    <property type="taxonomic scope" value="Archaea"/>
</dbReference>
<dbReference type="Proteomes" id="UP000002518">
    <property type="component" value="Chromosome"/>
</dbReference>
<dbReference type="GO" id="GO:0005829">
    <property type="term" value="C:cytosol"/>
    <property type="evidence" value="ECO:0007669"/>
    <property type="project" value="TreeGrafter"/>
</dbReference>
<dbReference type="GO" id="GO:0002161">
    <property type="term" value="F:aminoacyl-tRNA deacylase activity"/>
    <property type="evidence" value="ECO:0007669"/>
    <property type="project" value="InterPro"/>
</dbReference>
<dbReference type="GO" id="GO:0005524">
    <property type="term" value="F:ATP binding"/>
    <property type="evidence" value="ECO:0007669"/>
    <property type="project" value="UniProtKB-KW"/>
</dbReference>
<dbReference type="GO" id="GO:0004832">
    <property type="term" value="F:valine-tRNA ligase activity"/>
    <property type="evidence" value="ECO:0007669"/>
    <property type="project" value="UniProtKB-EC"/>
</dbReference>
<dbReference type="GO" id="GO:0006438">
    <property type="term" value="P:valyl-tRNA aminoacylation"/>
    <property type="evidence" value="ECO:0007669"/>
    <property type="project" value="InterPro"/>
</dbReference>
<dbReference type="CDD" id="cd07962">
    <property type="entry name" value="Anticodon_Ia_Val"/>
    <property type="match status" value="1"/>
</dbReference>
<dbReference type="FunFam" id="3.40.50.620:FF:000192">
    <property type="entry name" value="Valine--tRNA ligase"/>
    <property type="match status" value="1"/>
</dbReference>
<dbReference type="Gene3D" id="3.40.50.620">
    <property type="entry name" value="HUPs"/>
    <property type="match status" value="2"/>
</dbReference>
<dbReference type="Gene3D" id="1.10.730.10">
    <property type="entry name" value="Isoleucyl-tRNA Synthetase, Domain 1"/>
    <property type="match status" value="1"/>
</dbReference>
<dbReference type="InterPro" id="IPR002300">
    <property type="entry name" value="aa-tRNA-synth_Ia"/>
</dbReference>
<dbReference type="InterPro" id="IPR033705">
    <property type="entry name" value="Anticodon_Ia_Val"/>
</dbReference>
<dbReference type="InterPro" id="IPR013155">
    <property type="entry name" value="M/V/L/I-tRNA-synth_anticd-bd"/>
</dbReference>
<dbReference type="InterPro" id="IPR014729">
    <property type="entry name" value="Rossmann-like_a/b/a_fold"/>
</dbReference>
<dbReference type="InterPro" id="IPR009080">
    <property type="entry name" value="tRNAsynth_Ia_anticodon-bd"/>
</dbReference>
<dbReference type="InterPro" id="IPR009008">
    <property type="entry name" value="Val/Leu/Ile-tRNA-synth_edit"/>
</dbReference>
<dbReference type="InterPro" id="IPR002303">
    <property type="entry name" value="Valyl-tRNA_ligase"/>
</dbReference>
<dbReference type="NCBIfam" id="NF009687">
    <property type="entry name" value="PRK13208.1"/>
    <property type="match status" value="1"/>
</dbReference>
<dbReference type="PANTHER" id="PTHR11946:SF93">
    <property type="entry name" value="VALINE--TRNA LIGASE, CHLOROPLASTIC_MITOCHONDRIAL 2"/>
    <property type="match status" value="1"/>
</dbReference>
<dbReference type="PANTHER" id="PTHR11946">
    <property type="entry name" value="VALYL-TRNA SYNTHETASES"/>
    <property type="match status" value="1"/>
</dbReference>
<dbReference type="Pfam" id="PF08264">
    <property type="entry name" value="Anticodon_1"/>
    <property type="match status" value="1"/>
</dbReference>
<dbReference type="Pfam" id="PF00133">
    <property type="entry name" value="tRNA-synt_1"/>
    <property type="match status" value="1"/>
</dbReference>
<dbReference type="PRINTS" id="PR00986">
    <property type="entry name" value="TRNASYNTHVAL"/>
</dbReference>
<dbReference type="SUPFAM" id="SSF47323">
    <property type="entry name" value="Anticodon-binding domain of a subclass of class I aminoacyl-tRNA synthetases"/>
    <property type="match status" value="1"/>
</dbReference>
<dbReference type="SUPFAM" id="SSF52374">
    <property type="entry name" value="Nucleotidylyl transferase"/>
    <property type="match status" value="1"/>
</dbReference>
<dbReference type="SUPFAM" id="SSF50677">
    <property type="entry name" value="ValRS/IleRS/LeuRS editing domain"/>
    <property type="match status" value="1"/>
</dbReference>
<comment type="function">
    <text evidence="1">Catalyzes the attachment of valine to tRNA(Val). As ValRS can inadvertently accommodate and process structurally similar amino acids such as threonine, to avoid such errors, it has a 'posttransfer' editing activity that hydrolyzes mischarged Thr-tRNA(Val) in a tRNA-dependent manner (By similarity).</text>
</comment>
<comment type="catalytic activity">
    <reaction>
        <text>tRNA(Val) + L-valine + ATP = L-valyl-tRNA(Val) + AMP + diphosphate</text>
        <dbReference type="Rhea" id="RHEA:10704"/>
        <dbReference type="Rhea" id="RHEA-COMP:9672"/>
        <dbReference type="Rhea" id="RHEA-COMP:9708"/>
        <dbReference type="ChEBI" id="CHEBI:30616"/>
        <dbReference type="ChEBI" id="CHEBI:33019"/>
        <dbReference type="ChEBI" id="CHEBI:57762"/>
        <dbReference type="ChEBI" id="CHEBI:78442"/>
        <dbReference type="ChEBI" id="CHEBI:78537"/>
        <dbReference type="ChEBI" id="CHEBI:456215"/>
        <dbReference type="EC" id="6.1.1.9"/>
    </reaction>
</comment>
<comment type="subcellular location">
    <subcellularLocation>
        <location evidence="1">Cytoplasm</location>
    </subcellularLocation>
</comment>
<comment type="domain">
    <text evidence="1">ValRS has two distinct active sites: one for aminoacylation and one for editing. The misactivated threonine is translocated from the active site to the editing site (By similarity).</text>
</comment>
<comment type="similarity">
    <text evidence="2">Belongs to the class-I aminoacyl-tRNA synthetase family. ValS type 2 subfamily.</text>
</comment>
<sequence length="823" mass="95247">MGEEFKPAIQEKRWDIGEEEKLLSLWDAEDLHKSTLDPDDPREIVVIDTPPPYPSGKWHVGGAAHYTQIDMIARYFRLKGYNVVAPFYADRNGLPVEVQVEKTYGVVAHEMARTTEGRERFLALCSEFLDKVESEIVQLWRRLGCGFDYWREGTDSPRYRSMTQATFIDLWRRGLIYEAERPVRWCPRCKTTLAEAEIEHKEDEDFIYYVKYRLEEDGRDLVVATTRPELLAGCAALAYHPEDERYKGLAGKTAIAPLYGHRVKIVEHPAVKKDFGTGLMMICSYGDEEDVRLFLELDLKPKVLIDENGVMNENAGPIAGLPVKEARRRIAEILEREGLLVKKERIVHSVPVCWRCKTPLQIIHRRELFLRQLDFKDAVKQAAAKMDFKPEMHRKKLYDWIDSIKMDWPISRERFYGTEIPLWTCEKCGAKLVPEPGRYYRPWAEEPPWDSCPRCGAPRRYLKGETRVFDTWFDSSISPLYVTRWMWDKRFYERASRNVLRPQGQDIIRTWLYYSILRVLQLTGKPAFRWVRITGLGLDPKGRPMHKSLGNVIDPEPIIAKYGGDAFRFWAAIAAKLGYDYRFDENKVKTGRNFATKLWNLARFVSSFPRPEGSPLEKATEVDKAFLALADEYLEAADKAYGELDVYEPANLIYELAWDIFASHYVELVKERSYNRSGLFTREEQEAAWATLHELLRRILVALSPIMPFVTDAIHRRLYGSSVHRQRWPDPLFTPEERRELAGKARLIVSVNKAVWNLKRSMGKKLYEPLDTVEVLVPSGIESARRDLEALHKAAIRTYTGAPPEGSEEAIPGSSVYYIAKKS</sequence>
<reference key="1">
    <citation type="journal article" date="1999" name="DNA Res.">
        <title>Complete genome sequence of an aerobic hyper-thermophilic crenarchaeon, Aeropyrum pernix K1.</title>
        <authorList>
            <person name="Kawarabayasi Y."/>
            <person name="Hino Y."/>
            <person name="Horikawa H."/>
            <person name="Yamazaki S."/>
            <person name="Haikawa Y."/>
            <person name="Jin-no K."/>
            <person name="Takahashi M."/>
            <person name="Sekine M."/>
            <person name="Baba S."/>
            <person name="Ankai A."/>
            <person name="Kosugi H."/>
            <person name="Hosoyama A."/>
            <person name="Fukui S."/>
            <person name="Nagai Y."/>
            <person name="Nishijima K."/>
            <person name="Nakazawa H."/>
            <person name="Takamiya M."/>
            <person name="Masuda S."/>
            <person name="Funahashi T."/>
            <person name="Tanaka T."/>
            <person name="Kudoh Y."/>
            <person name="Yamazaki J."/>
            <person name="Kushida N."/>
            <person name="Oguchi A."/>
            <person name="Aoki K."/>
            <person name="Kubota K."/>
            <person name="Nakamura Y."/>
            <person name="Nomura N."/>
            <person name="Sako Y."/>
            <person name="Kikuchi H."/>
        </authorList>
    </citation>
    <scope>NUCLEOTIDE SEQUENCE [LARGE SCALE GENOMIC DNA]</scope>
    <source>
        <strain>ATCC 700893 / DSM 11879 / JCM 9820 / NBRC 100138 / K1</strain>
    </source>
</reference>
<feature type="chain" id="PRO_0000106247" description="Valine--tRNA ligase">
    <location>
        <begin position="1"/>
        <end position="823"/>
    </location>
</feature>
<feature type="binding site" evidence="1">
    <location>
        <position position="547"/>
    </location>
    <ligand>
        <name>ATP</name>
        <dbReference type="ChEBI" id="CHEBI:30616"/>
    </ligand>
</feature>
<protein>
    <recommendedName>
        <fullName>Valine--tRNA ligase</fullName>
        <ecNumber>6.1.1.9</ecNumber>
    </recommendedName>
    <alternativeName>
        <fullName>Valyl-tRNA synthetase</fullName>
        <shortName>ValRS</shortName>
    </alternativeName>
</protein>
<evidence type="ECO:0000250" key="1"/>
<evidence type="ECO:0000305" key="2"/>
<gene>
    <name type="primary">valS</name>
    <name type="ordered locus">APE_1805.1</name>
</gene>
<proteinExistence type="inferred from homology"/>